<proteinExistence type="inferred from homology"/>
<protein>
    <recommendedName>
        <fullName evidence="1">Urease subunit gamma</fullName>
        <ecNumber evidence="1">3.5.1.5</ecNumber>
    </recommendedName>
    <alternativeName>
        <fullName evidence="1">Urea amidohydrolase subunit gamma</fullName>
    </alternativeName>
</protein>
<dbReference type="EC" id="3.5.1.5" evidence="1"/>
<dbReference type="EMBL" id="BA000004">
    <property type="protein sequence ID" value="BAB03971.1"/>
    <property type="molecule type" value="Genomic_DNA"/>
</dbReference>
<dbReference type="PIR" id="D83681">
    <property type="entry name" value="D83681"/>
</dbReference>
<dbReference type="RefSeq" id="WP_010896434.1">
    <property type="nucleotide sequence ID" value="NC_002570.2"/>
</dbReference>
<dbReference type="SMR" id="Q9KG61"/>
<dbReference type="STRING" id="272558.gene:10726097"/>
<dbReference type="GeneID" id="87595805"/>
<dbReference type="KEGG" id="bha:BH0252"/>
<dbReference type="eggNOG" id="COG0831">
    <property type="taxonomic scope" value="Bacteria"/>
</dbReference>
<dbReference type="HOGENOM" id="CLU_145825_1_0_9"/>
<dbReference type="OrthoDB" id="9793527at2"/>
<dbReference type="UniPathway" id="UPA00258">
    <property type="reaction ID" value="UER00370"/>
</dbReference>
<dbReference type="Proteomes" id="UP000001258">
    <property type="component" value="Chromosome"/>
</dbReference>
<dbReference type="GO" id="GO:0005737">
    <property type="term" value="C:cytoplasm"/>
    <property type="evidence" value="ECO:0007669"/>
    <property type="project" value="UniProtKB-SubCell"/>
</dbReference>
<dbReference type="GO" id="GO:0016151">
    <property type="term" value="F:nickel cation binding"/>
    <property type="evidence" value="ECO:0007669"/>
    <property type="project" value="InterPro"/>
</dbReference>
<dbReference type="GO" id="GO:0009039">
    <property type="term" value="F:urease activity"/>
    <property type="evidence" value="ECO:0007669"/>
    <property type="project" value="UniProtKB-UniRule"/>
</dbReference>
<dbReference type="GO" id="GO:0043419">
    <property type="term" value="P:urea catabolic process"/>
    <property type="evidence" value="ECO:0007669"/>
    <property type="project" value="UniProtKB-UniRule"/>
</dbReference>
<dbReference type="CDD" id="cd00390">
    <property type="entry name" value="Urease_gamma"/>
    <property type="match status" value="1"/>
</dbReference>
<dbReference type="Gene3D" id="3.30.280.10">
    <property type="entry name" value="Urease, gamma-like subunit"/>
    <property type="match status" value="1"/>
</dbReference>
<dbReference type="HAMAP" id="MF_00739">
    <property type="entry name" value="Urease_gamma"/>
    <property type="match status" value="1"/>
</dbReference>
<dbReference type="InterPro" id="IPR012010">
    <property type="entry name" value="Urease_gamma"/>
</dbReference>
<dbReference type="InterPro" id="IPR002026">
    <property type="entry name" value="Urease_gamma/gamma-beta_su"/>
</dbReference>
<dbReference type="InterPro" id="IPR036463">
    <property type="entry name" value="Urease_gamma_sf"/>
</dbReference>
<dbReference type="InterPro" id="IPR050069">
    <property type="entry name" value="Urease_subunit"/>
</dbReference>
<dbReference type="NCBIfam" id="NF009712">
    <property type="entry name" value="PRK13241.1"/>
    <property type="match status" value="1"/>
</dbReference>
<dbReference type="NCBIfam" id="TIGR00193">
    <property type="entry name" value="urease_gam"/>
    <property type="match status" value="1"/>
</dbReference>
<dbReference type="PANTHER" id="PTHR33569">
    <property type="entry name" value="UREASE"/>
    <property type="match status" value="1"/>
</dbReference>
<dbReference type="PANTHER" id="PTHR33569:SF1">
    <property type="entry name" value="UREASE"/>
    <property type="match status" value="1"/>
</dbReference>
<dbReference type="Pfam" id="PF00547">
    <property type="entry name" value="Urease_gamma"/>
    <property type="match status" value="1"/>
</dbReference>
<dbReference type="PIRSF" id="PIRSF001223">
    <property type="entry name" value="Urease_gamma"/>
    <property type="match status" value="1"/>
</dbReference>
<dbReference type="SUPFAM" id="SSF54111">
    <property type="entry name" value="Urease, gamma-subunit"/>
    <property type="match status" value="1"/>
</dbReference>
<comment type="catalytic activity">
    <reaction evidence="1">
        <text>urea + 2 H2O + H(+) = hydrogencarbonate + 2 NH4(+)</text>
        <dbReference type="Rhea" id="RHEA:20557"/>
        <dbReference type="ChEBI" id="CHEBI:15377"/>
        <dbReference type="ChEBI" id="CHEBI:15378"/>
        <dbReference type="ChEBI" id="CHEBI:16199"/>
        <dbReference type="ChEBI" id="CHEBI:17544"/>
        <dbReference type="ChEBI" id="CHEBI:28938"/>
        <dbReference type="EC" id="3.5.1.5"/>
    </reaction>
</comment>
<comment type="pathway">
    <text evidence="1">Nitrogen metabolism; urea degradation; CO(2) and NH(3) from urea (urease route): step 1/1.</text>
</comment>
<comment type="subunit">
    <text evidence="1">Heterotrimer of UreA (gamma), UreB (beta) and UreC (alpha) subunits. Three heterotrimers associate to form the active enzyme.</text>
</comment>
<comment type="subcellular location">
    <subcellularLocation>
        <location evidence="1">Cytoplasm</location>
    </subcellularLocation>
</comment>
<comment type="similarity">
    <text evidence="1">Belongs to the urease gamma subunit family.</text>
</comment>
<keyword id="KW-0963">Cytoplasm</keyword>
<keyword id="KW-0378">Hydrolase</keyword>
<keyword id="KW-1185">Reference proteome</keyword>
<evidence type="ECO:0000255" key="1">
    <source>
        <dbReference type="HAMAP-Rule" id="MF_00739"/>
    </source>
</evidence>
<name>URE3_HALH5</name>
<reference key="1">
    <citation type="journal article" date="2000" name="Nucleic Acids Res.">
        <title>Complete genome sequence of the alkaliphilic bacterium Bacillus halodurans and genomic sequence comparison with Bacillus subtilis.</title>
        <authorList>
            <person name="Takami H."/>
            <person name="Nakasone K."/>
            <person name="Takaki Y."/>
            <person name="Maeno G."/>
            <person name="Sasaki R."/>
            <person name="Masui N."/>
            <person name="Fuji F."/>
            <person name="Hirama C."/>
            <person name="Nakamura Y."/>
            <person name="Ogasawara N."/>
            <person name="Kuhara S."/>
            <person name="Horikoshi K."/>
        </authorList>
    </citation>
    <scope>NUCLEOTIDE SEQUENCE [LARGE SCALE GENOMIC DNA]</scope>
    <source>
        <strain>ATCC BAA-125 / DSM 18197 / FERM 7344 / JCM 9153 / C-125</strain>
    </source>
</reference>
<organism>
    <name type="scientific">Halalkalibacterium halodurans (strain ATCC BAA-125 / DSM 18197 / FERM 7344 / JCM 9153 / C-125)</name>
    <name type="common">Bacillus halodurans</name>
    <dbReference type="NCBI Taxonomy" id="272558"/>
    <lineage>
        <taxon>Bacteria</taxon>
        <taxon>Bacillati</taxon>
        <taxon>Bacillota</taxon>
        <taxon>Bacilli</taxon>
        <taxon>Bacillales</taxon>
        <taxon>Bacillaceae</taxon>
        <taxon>Halalkalibacterium (ex Joshi et al. 2022)</taxon>
    </lineage>
</organism>
<accession>Q9KG61</accession>
<sequence>MRLSPVEKEKLFLFMAGELAKQRMDRGLKLNYPEAVAILSCYVLEGAREGKSVSELMKDGKHVLSTEDVMEGVPEMLEEIQVEATFPDGVKLVTIHEPIQ</sequence>
<feature type="chain" id="PRO_0000097990" description="Urease subunit gamma">
    <location>
        <begin position="1"/>
        <end position="100"/>
    </location>
</feature>
<gene>
    <name evidence="1" type="primary">ureA</name>
    <name type="ordered locus">BH0252</name>
</gene>